<organism>
    <name type="scientific">Escherichia coli (strain K12)</name>
    <dbReference type="NCBI Taxonomy" id="83333"/>
    <lineage>
        <taxon>Bacteria</taxon>
        <taxon>Pseudomonadati</taxon>
        <taxon>Pseudomonadota</taxon>
        <taxon>Gammaproteobacteria</taxon>
        <taxon>Enterobacterales</taxon>
        <taxon>Enterobacteriaceae</taxon>
        <taxon>Escherichia</taxon>
    </lineage>
</organism>
<protein>
    <recommendedName>
        <fullName>Uncharacterized protein YdaQ</fullName>
    </recommendedName>
</protein>
<name>YDAQ_ECOLI</name>
<feature type="chain" id="PRO_0000168909" description="Uncharacterized protein YdaQ">
    <location>
        <begin position="1"/>
        <end position="71"/>
    </location>
</feature>
<sequence length="71" mass="8456">MAQVIFNEEWMVEYGLMLRTGLGARQIEAYRQNCWVEGFHFKRVSPLGKPDSKRGIIWYNYPKINQFIKDS</sequence>
<keyword id="KW-1185">Reference proteome</keyword>
<accession>P76057</accession>
<accession>Q2MBE7</accession>
<reference key="1">
    <citation type="journal article" date="1997" name="Science">
        <title>The complete genome sequence of Escherichia coli K-12.</title>
        <authorList>
            <person name="Blattner F.R."/>
            <person name="Plunkett G. III"/>
            <person name="Bloch C.A."/>
            <person name="Perna N.T."/>
            <person name="Burland V."/>
            <person name="Riley M."/>
            <person name="Collado-Vides J."/>
            <person name="Glasner J.D."/>
            <person name="Rode C.K."/>
            <person name="Mayhew G.F."/>
            <person name="Gregor J."/>
            <person name="Davis N.W."/>
            <person name="Kirkpatrick H.A."/>
            <person name="Goeden M.A."/>
            <person name="Rose D.J."/>
            <person name="Mau B."/>
            <person name="Shao Y."/>
        </authorList>
    </citation>
    <scope>NUCLEOTIDE SEQUENCE [LARGE SCALE GENOMIC DNA]</scope>
    <source>
        <strain>K12 / MG1655 / ATCC 47076</strain>
    </source>
</reference>
<reference key="2">
    <citation type="journal article" date="2006" name="Mol. Syst. Biol.">
        <title>Highly accurate genome sequences of Escherichia coli K-12 strains MG1655 and W3110.</title>
        <authorList>
            <person name="Hayashi K."/>
            <person name="Morooka N."/>
            <person name="Yamamoto Y."/>
            <person name="Fujita K."/>
            <person name="Isono K."/>
            <person name="Choi S."/>
            <person name="Ohtsubo E."/>
            <person name="Baba T."/>
            <person name="Wanner B.L."/>
            <person name="Mori H."/>
            <person name="Horiuchi T."/>
        </authorList>
    </citation>
    <scope>NUCLEOTIDE SEQUENCE [LARGE SCALE GENOMIC DNA]</scope>
    <source>
        <strain>K12 / W3110 / ATCC 27325 / DSM 5911</strain>
    </source>
</reference>
<dbReference type="EMBL" id="U00096">
    <property type="protein sequence ID" value="AAC74428.2"/>
    <property type="molecule type" value="Genomic_DNA"/>
</dbReference>
<dbReference type="EMBL" id="AP009048">
    <property type="protein sequence ID" value="BAE76409.1"/>
    <property type="molecule type" value="Genomic_DNA"/>
</dbReference>
<dbReference type="RefSeq" id="NP_415862.4">
    <property type="nucleotide sequence ID" value="NC_000913.3"/>
</dbReference>
<dbReference type="SMR" id="P76057"/>
<dbReference type="BioGRID" id="4261946">
    <property type="interactions" value="179"/>
</dbReference>
<dbReference type="FunCoup" id="P76057">
    <property type="interactions" value="29"/>
</dbReference>
<dbReference type="STRING" id="511145.b1346"/>
<dbReference type="PaxDb" id="511145-b1346"/>
<dbReference type="EnsemblBacteria" id="AAC74428">
    <property type="protein sequence ID" value="AAC74428"/>
    <property type="gene ID" value="b1346"/>
</dbReference>
<dbReference type="GeneID" id="947399"/>
<dbReference type="KEGG" id="ecj:JW5207"/>
<dbReference type="KEGG" id="eco:b1346"/>
<dbReference type="KEGG" id="ecoc:C3026_07885"/>
<dbReference type="PATRIC" id="fig|511145.12.peg.1406"/>
<dbReference type="EchoBASE" id="EB3142"/>
<dbReference type="eggNOG" id="ENOG5032Z2C">
    <property type="taxonomic scope" value="Bacteria"/>
</dbReference>
<dbReference type="HOGENOM" id="CLU_202391_0_0_6"/>
<dbReference type="InParanoid" id="P76057"/>
<dbReference type="OMA" id="HEWIVED"/>
<dbReference type="OrthoDB" id="5829479at2"/>
<dbReference type="BioCyc" id="EcoCyc:G6677-MONOMER"/>
<dbReference type="PRO" id="PR:P76057"/>
<dbReference type="Proteomes" id="UP000000625">
    <property type="component" value="Chromosome"/>
</dbReference>
<dbReference type="GO" id="GO:1990837">
    <property type="term" value="F:sequence-specific double-stranded DNA binding"/>
    <property type="evidence" value="ECO:0000314"/>
    <property type="project" value="EcoCyc"/>
</dbReference>
<dbReference type="GO" id="GO:0032359">
    <property type="term" value="P:provirus excision"/>
    <property type="evidence" value="ECO:0000315"/>
    <property type="project" value="EcoCyc"/>
</dbReference>
<dbReference type="Gene3D" id="1.10.1660.60">
    <property type="entry name" value="Putative excisionased domain DUF1233"/>
    <property type="match status" value="1"/>
</dbReference>
<dbReference type="InterPro" id="IPR038146">
    <property type="entry name" value="933W_put_Xis_sf"/>
</dbReference>
<dbReference type="InterPro" id="IPR009634">
    <property type="entry name" value="Put_exci"/>
</dbReference>
<dbReference type="Pfam" id="PF06806">
    <property type="entry name" value="DUF1233"/>
    <property type="match status" value="1"/>
</dbReference>
<proteinExistence type="predicted"/>
<gene>
    <name type="primary">ydaQ</name>
    <name type="ordered locus">b1346</name>
    <name type="ordered locus">JW5207</name>
</gene>